<evidence type="ECO:0000250" key="1"/>
<evidence type="ECO:0000255" key="2">
    <source>
        <dbReference type="PROSITE-ProRule" id="PRU01185"/>
    </source>
</evidence>
<evidence type="ECO:0000256" key="3">
    <source>
        <dbReference type="SAM" id="MobiDB-lite"/>
    </source>
</evidence>
<evidence type="ECO:0000305" key="4"/>
<organism>
    <name type="scientific">Eremothecium gossypii (strain ATCC 10895 / CBS 109.51 / FGSC 9923 / NRRL Y-1056)</name>
    <name type="common">Yeast</name>
    <name type="synonym">Ashbya gossypii</name>
    <dbReference type="NCBI Taxonomy" id="284811"/>
    <lineage>
        <taxon>Eukaryota</taxon>
        <taxon>Fungi</taxon>
        <taxon>Dikarya</taxon>
        <taxon>Ascomycota</taxon>
        <taxon>Saccharomycotina</taxon>
        <taxon>Saccharomycetes</taxon>
        <taxon>Saccharomycetales</taxon>
        <taxon>Saccharomycetaceae</taxon>
        <taxon>Eremothecium</taxon>
    </lineage>
</organism>
<accession>Q75CD6</accession>
<dbReference type="EMBL" id="AE016816">
    <property type="protein sequence ID" value="AAS51201.1"/>
    <property type="molecule type" value="Genomic_DNA"/>
</dbReference>
<dbReference type="RefSeq" id="NP_983377.1">
    <property type="nucleotide sequence ID" value="NM_208730.1"/>
</dbReference>
<dbReference type="FunCoup" id="Q75CD6">
    <property type="interactions" value="82"/>
</dbReference>
<dbReference type="STRING" id="284811.Q75CD6"/>
<dbReference type="EnsemblFungi" id="AAS51201">
    <property type="protein sequence ID" value="AAS51201"/>
    <property type="gene ID" value="AGOS_ACL027C"/>
</dbReference>
<dbReference type="GeneID" id="4619502"/>
<dbReference type="KEGG" id="ago:AGOS_ACL027C"/>
<dbReference type="eggNOG" id="ENOG502RK42">
    <property type="taxonomic scope" value="Eukaryota"/>
</dbReference>
<dbReference type="HOGENOM" id="CLU_051217_0_0_1"/>
<dbReference type="InParanoid" id="Q75CD6"/>
<dbReference type="OMA" id="WNTEINE"/>
<dbReference type="OrthoDB" id="4033625at2759"/>
<dbReference type="Proteomes" id="UP000000591">
    <property type="component" value="Chromosome III"/>
</dbReference>
<dbReference type="GO" id="GO:0008180">
    <property type="term" value="C:COP9 signalosome"/>
    <property type="evidence" value="ECO:0000318"/>
    <property type="project" value="GO_Central"/>
</dbReference>
<dbReference type="GO" id="GO:0005737">
    <property type="term" value="C:cytoplasm"/>
    <property type="evidence" value="ECO:0007669"/>
    <property type="project" value="UniProtKB-SubCell"/>
</dbReference>
<dbReference type="InterPro" id="IPR000717">
    <property type="entry name" value="PCI_dom"/>
</dbReference>
<dbReference type="InterPro" id="IPR019585">
    <property type="entry name" value="Rpn7/CSN1"/>
</dbReference>
<dbReference type="PANTHER" id="PTHR14145">
    <property type="entry name" value="26S PROTESOME SUBUNIT 6"/>
    <property type="match status" value="1"/>
</dbReference>
<dbReference type="PANTHER" id="PTHR14145:SF2">
    <property type="entry name" value="COP9 SIGNALOSOME COMPLEX SUBUNIT 1"/>
    <property type="match status" value="1"/>
</dbReference>
<dbReference type="PROSITE" id="PS50250">
    <property type="entry name" value="PCI"/>
    <property type="match status" value="1"/>
</dbReference>
<keyword id="KW-0963">Cytoplasm</keyword>
<keyword id="KW-0539">Nucleus</keyword>
<keyword id="KW-1185">Reference proteome</keyword>
<keyword id="KW-0736">Signalosome</keyword>
<reference key="1">
    <citation type="journal article" date="2004" name="Science">
        <title>The Ashbya gossypii genome as a tool for mapping the ancient Saccharomyces cerevisiae genome.</title>
        <authorList>
            <person name="Dietrich F.S."/>
            <person name="Voegeli S."/>
            <person name="Brachat S."/>
            <person name="Lerch A."/>
            <person name="Gates K."/>
            <person name="Steiner S."/>
            <person name="Mohr C."/>
            <person name="Poehlmann R."/>
            <person name="Luedi P."/>
            <person name="Choi S."/>
            <person name="Wing R.A."/>
            <person name="Flavier A."/>
            <person name="Gaffney T.D."/>
            <person name="Philippsen P."/>
        </authorList>
    </citation>
    <scope>NUCLEOTIDE SEQUENCE [LARGE SCALE GENOMIC DNA]</scope>
    <source>
        <strain>ATCC 10895 / CBS 109.51 / FGSC 9923 / NRRL Y-1056</strain>
    </source>
</reference>
<reference key="2">
    <citation type="journal article" date="2013" name="G3 (Bethesda)">
        <title>Genomes of Ashbya fungi isolated from insects reveal four mating-type loci, numerous translocations, lack of transposons, and distinct gene duplications.</title>
        <authorList>
            <person name="Dietrich F.S."/>
            <person name="Voegeli S."/>
            <person name="Kuo S."/>
            <person name="Philippsen P."/>
        </authorList>
    </citation>
    <scope>GENOME REANNOTATION</scope>
    <source>
        <strain>ATCC 10895 / CBS 109.51 / FGSC 9923 / NRRL Y-1056</strain>
    </source>
</reference>
<name>CSN11_EREGS</name>
<comment type="function">
    <text evidence="1">Component of the COP9 signalosome (CSN) complex that acts as an regulator of the ubiquitin (Ubl) conjugation pathway by mediating the deneddylation of the cullin subunit of SCF-type E3 ubiquitin-protein ligase complexes The CSN complex is involved in the regulation of the mating pheromone response. PCI8 may also be involved in transcriptional and translational control (By similarity).</text>
</comment>
<comment type="subunit">
    <text evidence="1">Component of a COP9 signalosome-like (CSN) complex.</text>
</comment>
<comment type="subcellular location">
    <subcellularLocation>
        <location evidence="4">Cytoplasm</location>
    </subcellularLocation>
    <subcellularLocation>
        <location evidence="4">Nucleus</location>
    </subcellularLocation>
</comment>
<protein>
    <recommendedName>
        <fullName>COP9 signalosome complex subunit 11</fullName>
    </recommendedName>
</protein>
<sequence>MDQFEVLVAVERLFFAWEQISDKETLVERLEGRLADMNLSLSTSPHRSLFLPYLGTRKDHNVADPDTISSEYGLQLLVLENALAHNYSKAISLLESSTVGDVGYIEWCRCMMRLNILGKSYGNNSELDIGLRSYLRNGAQGSSLLLTDEVSDCRMLGFASLFLQEEYFIAVHHMVRSIHEHPSLVDYLLREEDGRDIFILKEEYKLMLTIAVLVAIPLENYQDFLLLEDLNPLLQGLPELHVCLNLLVSTSFGSFFARWLGPIQELANRSCFLAPVWHSVNSHMRSKILVFYIKISERVTVSYLARTLDIPYDTVMADVSSLIQKFDINIGIEGDLVYYKEDLPVGNLVSKVSQIQREIDSKLLVMKQKNDALRSFIENMLKEQSVEPLNRSQDMDAFELHEQSEDEEYEEEHLEEGENV</sequence>
<gene>
    <name type="primary">PCI8</name>
    <name type="synonym">CSN11</name>
    <name type="ordered locus">ACL027C</name>
</gene>
<feature type="chain" id="PRO_0000121025" description="COP9 signalosome complex subunit 11">
    <location>
        <begin position="1"/>
        <end position="420"/>
    </location>
</feature>
<feature type="domain" description="PCI" evidence="2">
    <location>
        <begin position="177"/>
        <end position="346"/>
    </location>
</feature>
<feature type="region of interest" description="Disordered" evidence="3">
    <location>
        <begin position="386"/>
        <end position="420"/>
    </location>
</feature>
<feature type="compositionally biased region" description="Acidic residues" evidence="3">
    <location>
        <begin position="404"/>
        <end position="420"/>
    </location>
</feature>
<proteinExistence type="inferred from homology"/>